<name>CA52A_XENLA</name>
<dbReference type="EMBL" id="BC089265">
    <property type="protein sequence ID" value="AAH89265.1"/>
    <property type="molecule type" value="mRNA"/>
</dbReference>
<dbReference type="RefSeq" id="NP_001089243.1">
    <property type="nucleotide sequence ID" value="NM_001095774.1"/>
</dbReference>
<dbReference type="DNASU" id="734290"/>
<dbReference type="GeneID" id="734290"/>
<dbReference type="KEGG" id="xla:734290"/>
<dbReference type="AGR" id="Xenbase:XB-GENE-975911"/>
<dbReference type="CTD" id="734290"/>
<dbReference type="Xenbase" id="XB-GENE-975911">
    <property type="gene designation" value="c4h1orf52.S"/>
</dbReference>
<dbReference type="OrthoDB" id="1906229at2759"/>
<dbReference type="Proteomes" id="UP000186698">
    <property type="component" value="Chromosome 4S"/>
</dbReference>
<dbReference type="Bgee" id="734290">
    <property type="expression patterns" value="Expressed in egg cell and 19 other cell types or tissues"/>
</dbReference>
<dbReference type="InterPro" id="IPR029089">
    <property type="entry name" value="DUF4660"/>
</dbReference>
<dbReference type="PANTHER" id="PTHR31833">
    <property type="entry name" value="UPF0690 PROTEIN C1ORF52"/>
    <property type="match status" value="1"/>
</dbReference>
<dbReference type="PANTHER" id="PTHR31833:SF2">
    <property type="entry name" value="UPF0690 PROTEIN C1ORF52"/>
    <property type="match status" value="1"/>
</dbReference>
<dbReference type="Pfam" id="PF15559">
    <property type="entry name" value="DUF4660"/>
    <property type="match status" value="1"/>
</dbReference>
<accession>Q5FWN9</accession>
<proteinExistence type="evidence at transcript level"/>
<protein>
    <recommendedName>
        <fullName>UPF0690 protein C1orf52 homolog A</fullName>
    </recommendedName>
</protein>
<reference key="1">
    <citation type="submission" date="2005-01" db="EMBL/GenBank/DDBJ databases">
        <authorList>
            <consortium name="NIH - Xenopus Gene Collection (XGC) project"/>
        </authorList>
    </citation>
    <scope>NUCLEOTIDE SEQUENCE [LARGE SCALE MRNA]</scope>
    <source>
        <tissue>Egg</tissue>
    </source>
</reference>
<keyword id="KW-1185">Reference proteome</keyword>
<comment type="similarity">
    <text evidence="2">Belongs to the UPF0690 family.</text>
</comment>
<sequence>MAAEEKDPLSYFAAYGSSSSSDSESSDEEKETENAKNRAAKRPFPTEAKKLPGPDELFRSVSRPAFLYNPLNKQIDWESRVKRAPEEPAKEFKIWKTNAVPPPESYQVAEKKAPPPELDMAIKWSNVYQDNGDDAPHANQAKCLPEEEAQEDSPPSDDEQEKAFATKKRKV</sequence>
<organism>
    <name type="scientific">Xenopus laevis</name>
    <name type="common">African clawed frog</name>
    <dbReference type="NCBI Taxonomy" id="8355"/>
    <lineage>
        <taxon>Eukaryota</taxon>
        <taxon>Metazoa</taxon>
        <taxon>Chordata</taxon>
        <taxon>Craniata</taxon>
        <taxon>Vertebrata</taxon>
        <taxon>Euteleostomi</taxon>
        <taxon>Amphibia</taxon>
        <taxon>Batrachia</taxon>
        <taxon>Anura</taxon>
        <taxon>Pipoidea</taxon>
        <taxon>Pipidae</taxon>
        <taxon>Xenopodinae</taxon>
        <taxon>Xenopus</taxon>
        <taxon>Xenopus</taxon>
    </lineage>
</organism>
<evidence type="ECO:0000256" key="1">
    <source>
        <dbReference type="SAM" id="MobiDB-lite"/>
    </source>
</evidence>
<evidence type="ECO:0000305" key="2"/>
<feature type="chain" id="PRO_0000359775" description="UPF0690 protein C1orf52 homolog A">
    <location>
        <begin position="1"/>
        <end position="171"/>
    </location>
</feature>
<feature type="region of interest" description="Disordered" evidence="1">
    <location>
        <begin position="1"/>
        <end position="56"/>
    </location>
</feature>
<feature type="region of interest" description="Disordered" evidence="1">
    <location>
        <begin position="126"/>
        <end position="171"/>
    </location>
</feature>
<feature type="compositionally biased region" description="Basic and acidic residues" evidence="1">
    <location>
        <begin position="47"/>
        <end position="56"/>
    </location>
</feature>
<feature type="compositionally biased region" description="Acidic residues" evidence="1">
    <location>
        <begin position="146"/>
        <end position="160"/>
    </location>
</feature>